<reference key="1">
    <citation type="journal article" date="2002" name="Nature">
        <title>The genome sequence of Schizosaccharomyces pombe.</title>
        <authorList>
            <person name="Wood V."/>
            <person name="Gwilliam R."/>
            <person name="Rajandream M.A."/>
            <person name="Lyne M.H."/>
            <person name="Lyne R."/>
            <person name="Stewart A."/>
            <person name="Sgouros J.G."/>
            <person name="Peat N."/>
            <person name="Hayles J."/>
            <person name="Baker S.G."/>
            <person name="Basham D."/>
            <person name="Bowman S."/>
            <person name="Brooks K."/>
            <person name="Brown D."/>
            <person name="Brown S."/>
            <person name="Chillingworth T."/>
            <person name="Churcher C.M."/>
            <person name="Collins M."/>
            <person name="Connor R."/>
            <person name="Cronin A."/>
            <person name="Davis P."/>
            <person name="Feltwell T."/>
            <person name="Fraser A."/>
            <person name="Gentles S."/>
            <person name="Goble A."/>
            <person name="Hamlin N."/>
            <person name="Harris D.E."/>
            <person name="Hidalgo J."/>
            <person name="Hodgson G."/>
            <person name="Holroyd S."/>
            <person name="Hornsby T."/>
            <person name="Howarth S."/>
            <person name="Huckle E.J."/>
            <person name="Hunt S."/>
            <person name="Jagels K."/>
            <person name="James K.D."/>
            <person name="Jones L."/>
            <person name="Jones M."/>
            <person name="Leather S."/>
            <person name="McDonald S."/>
            <person name="McLean J."/>
            <person name="Mooney P."/>
            <person name="Moule S."/>
            <person name="Mungall K.L."/>
            <person name="Murphy L.D."/>
            <person name="Niblett D."/>
            <person name="Odell C."/>
            <person name="Oliver K."/>
            <person name="O'Neil S."/>
            <person name="Pearson D."/>
            <person name="Quail M.A."/>
            <person name="Rabbinowitsch E."/>
            <person name="Rutherford K.M."/>
            <person name="Rutter S."/>
            <person name="Saunders D."/>
            <person name="Seeger K."/>
            <person name="Sharp S."/>
            <person name="Skelton J."/>
            <person name="Simmonds M.N."/>
            <person name="Squares R."/>
            <person name="Squares S."/>
            <person name="Stevens K."/>
            <person name="Taylor K."/>
            <person name="Taylor R.G."/>
            <person name="Tivey A."/>
            <person name="Walsh S.V."/>
            <person name="Warren T."/>
            <person name="Whitehead S."/>
            <person name="Woodward J.R."/>
            <person name="Volckaert G."/>
            <person name="Aert R."/>
            <person name="Robben J."/>
            <person name="Grymonprez B."/>
            <person name="Weltjens I."/>
            <person name="Vanstreels E."/>
            <person name="Rieger M."/>
            <person name="Schaefer M."/>
            <person name="Mueller-Auer S."/>
            <person name="Gabel C."/>
            <person name="Fuchs M."/>
            <person name="Duesterhoeft A."/>
            <person name="Fritzc C."/>
            <person name="Holzer E."/>
            <person name="Moestl D."/>
            <person name="Hilbert H."/>
            <person name="Borzym K."/>
            <person name="Langer I."/>
            <person name="Beck A."/>
            <person name="Lehrach H."/>
            <person name="Reinhardt R."/>
            <person name="Pohl T.M."/>
            <person name="Eger P."/>
            <person name="Zimmermann W."/>
            <person name="Wedler H."/>
            <person name="Wambutt R."/>
            <person name="Purnelle B."/>
            <person name="Goffeau A."/>
            <person name="Cadieu E."/>
            <person name="Dreano S."/>
            <person name="Gloux S."/>
            <person name="Lelaure V."/>
            <person name="Mottier S."/>
            <person name="Galibert F."/>
            <person name="Aves S.J."/>
            <person name="Xiang Z."/>
            <person name="Hunt C."/>
            <person name="Moore K."/>
            <person name="Hurst S.M."/>
            <person name="Lucas M."/>
            <person name="Rochet M."/>
            <person name="Gaillardin C."/>
            <person name="Tallada V.A."/>
            <person name="Garzon A."/>
            <person name="Thode G."/>
            <person name="Daga R.R."/>
            <person name="Cruzado L."/>
            <person name="Jimenez J."/>
            <person name="Sanchez M."/>
            <person name="del Rey F."/>
            <person name="Benito J."/>
            <person name="Dominguez A."/>
            <person name="Revuelta J.L."/>
            <person name="Moreno S."/>
            <person name="Armstrong J."/>
            <person name="Forsburg S.L."/>
            <person name="Cerutti L."/>
            <person name="Lowe T."/>
            <person name="McCombie W.R."/>
            <person name="Paulsen I."/>
            <person name="Potashkin J."/>
            <person name="Shpakovski G.V."/>
            <person name="Ussery D."/>
            <person name="Barrell B.G."/>
            <person name="Nurse P."/>
        </authorList>
    </citation>
    <scope>NUCLEOTIDE SEQUENCE [LARGE SCALE GENOMIC DNA]</scope>
    <source>
        <strain>972 / ATCC 24843</strain>
    </source>
</reference>
<reference key="2">
    <citation type="journal article" date="2005" name="Curr. Biol.">
        <title>A large-scale screen in S. pombe identifies seven novel genes required for critical meiotic events.</title>
        <authorList>
            <person name="Martin-Castellanos C."/>
            <person name="Blanco M."/>
            <person name="Rozalen A.E."/>
            <person name="Perez-Hidalgo L."/>
            <person name="Garcia A.I."/>
            <person name="Conde F."/>
            <person name="Mata J."/>
            <person name="Ellermeier C."/>
            <person name="Davis L."/>
            <person name="San-Segundo P."/>
            <person name="Smith G.R."/>
            <person name="Moreno S."/>
        </authorList>
    </citation>
    <scope>FUNCTION IN MEIOSIS</scope>
</reference>
<reference key="3">
    <citation type="journal article" date="2006" name="Nat. Biotechnol.">
        <title>ORFeome cloning and global analysis of protein localization in the fission yeast Schizosaccharomyces pombe.</title>
        <authorList>
            <person name="Matsuyama A."/>
            <person name="Arai R."/>
            <person name="Yashiroda Y."/>
            <person name="Shirai A."/>
            <person name="Kamata A."/>
            <person name="Sekido S."/>
            <person name="Kobayashi Y."/>
            <person name="Hashimoto A."/>
            <person name="Hamamoto M."/>
            <person name="Hiraoka Y."/>
            <person name="Horinouchi S."/>
            <person name="Yoshida M."/>
        </authorList>
    </citation>
    <scope>SUBCELLULAR LOCATION [LARGE SCALE ANALYSIS]</scope>
</reference>
<gene>
    <name type="primary">mug115</name>
    <name type="ORF">SPAC56F8.14c</name>
</gene>
<organism>
    <name type="scientific">Schizosaccharomyces pombe (strain 972 / ATCC 24843)</name>
    <name type="common">Fission yeast</name>
    <dbReference type="NCBI Taxonomy" id="284812"/>
    <lineage>
        <taxon>Eukaryota</taxon>
        <taxon>Fungi</taxon>
        <taxon>Dikarya</taxon>
        <taxon>Ascomycota</taxon>
        <taxon>Taphrinomycotina</taxon>
        <taxon>Schizosaccharomycetes</taxon>
        <taxon>Schizosaccharomycetales</taxon>
        <taxon>Schizosaccharomycetaceae</taxon>
        <taxon>Schizosaccharomyces</taxon>
    </lineage>
</organism>
<accession>Q10262</accession>
<keyword id="KW-0469">Meiosis</keyword>
<keyword id="KW-0496">Mitochondrion</keyword>
<keyword id="KW-0539">Nucleus</keyword>
<keyword id="KW-1185">Reference proteome</keyword>
<evidence type="ECO:0000269" key="1">
    <source>
    </source>
</evidence>
<evidence type="ECO:0000269" key="2">
    <source>
    </source>
</evidence>
<sequence>MRKPCYAVYHPALRLKCLVRKGLGKIKGDTDMCDKQQLKKKEKEKQRAQKVACGPRDPPCTFSRSYTDQKRKEIHLGSTEWGLKESFTLTRGPNRRGNVGKGVKRPMVNKKLGQLELTSLDLRWQKEGKGN</sequence>
<dbReference type="EMBL" id="CU329670">
    <property type="protein sequence ID" value="CAA93585.1"/>
    <property type="molecule type" value="Genomic_DNA"/>
</dbReference>
<dbReference type="PIR" id="T38924">
    <property type="entry name" value="T38924"/>
</dbReference>
<dbReference type="RefSeq" id="NP_593228.1">
    <property type="nucleotide sequence ID" value="NM_001018625.2"/>
</dbReference>
<dbReference type="SMR" id="Q10262"/>
<dbReference type="BioGRID" id="279730">
    <property type="interactions" value="9"/>
</dbReference>
<dbReference type="PaxDb" id="4896-SPAC56F8.14c.1"/>
<dbReference type="EnsemblFungi" id="SPAC56F8.14c.1">
    <property type="protein sequence ID" value="SPAC56F8.14c.1:pep"/>
    <property type="gene ID" value="SPAC56F8.14c"/>
</dbReference>
<dbReference type="GeneID" id="2543306"/>
<dbReference type="KEGG" id="spo:2543306"/>
<dbReference type="PomBase" id="SPAC56F8.14c">
    <property type="gene designation" value="mug115"/>
</dbReference>
<dbReference type="VEuPathDB" id="FungiDB:SPAC56F8.14c"/>
<dbReference type="HOGENOM" id="CLU_1928804_0_0_1"/>
<dbReference type="InParanoid" id="Q10262"/>
<dbReference type="PRO" id="PR:Q10262"/>
<dbReference type="Proteomes" id="UP000002485">
    <property type="component" value="Chromosome I"/>
</dbReference>
<dbReference type="GO" id="GO:0005739">
    <property type="term" value="C:mitochondrion"/>
    <property type="evidence" value="ECO:0007005"/>
    <property type="project" value="PomBase"/>
</dbReference>
<dbReference type="GO" id="GO:0005634">
    <property type="term" value="C:nucleus"/>
    <property type="evidence" value="ECO:0007005"/>
    <property type="project" value="PomBase"/>
</dbReference>
<dbReference type="GO" id="GO:0051321">
    <property type="term" value="P:meiotic cell cycle"/>
    <property type="evidence" value="ECO:0007669"/>
    <property type="project" value="UniProtKB-KW"/>
</dbReference>
<proteinExistence type="evidence at protein level"/>
<feature type="chain" id="PRO_0000116572" description="Meiotically up-regulated gene 115 protein">
    <location>
        <begin position="1"/>
        <end position="131"/>
    </location>
</feature>
<protein>
    <recommendedName>
        <fullName>Meiotically up-regulated gene 115 protein</fullName>
    </recommendedName>
</protein>
<name>MU115_SCHPO</name>
<comment type="function">
    <text evidence="1">Has a role in meiosis.</text>
</comment>
<comment type="subcellular location">
    <subcellularLocation>
        <location evidence="2">Mitochondrion</location>
    </subcellularLocation>
    <subcellularLocation>
        <location evidence="2">Nucleus</location>
    </subcellularLocation>
</comment>